<evidence type="ECO:0000255" key="1">
    <source>
        <dbReference type="HAMAP-Rule" id="MF_00530"/>
    </source>
</evidence>
<comment type="function">
    <text evidence="1">Produces ATP from ADP in the presence of a proton gradient across the membrane.</text>
</comment>
<comment type="subunit">
    <text evidence="1">F-type ATPases have 2 components, CF(1) - the catalytic core - and CF(0) - the membrane proton channel. CF(1) has five subunits: alpha(3), beta(3), gamma(1), delta(1), epsilon(1). CF(0) has three main subunits: a, b and c.</text>
</comment>
<comment type="subcellular location">
    <subcellularLocation>
        <location evidence="1">Cell membrane</location>
        <topology evidence="1">Peripheral membrane protein</topology>
    </subcellularLocation>
</comment>
<comment type="similarity">
    <text evidence="1">Belongs to the ATPase epsilon chain family.</text>
</comment>
<organism>
    <name type="scientific">Streptococcus pneumoniae (strain Taiwan19F-14)</name>
    <dbReference type="NCBI Taxonomy" id="487213"/>
    <lineage>
        <taxon>Bacteria</taxon>
        <taxon>Bacillati</taxon>
        <taxon>Bacillota</taxon>
        <taxon>Bacilli</taxon>
        <taxon>Lactobacillales</taxon>
        <taxon>Streptococcaceae</taxon>
        <taxon>Streptococcus</taxon>
    </lineage>
</organism>
<dbReference type="EMBL" id="CP000921">
    <property type="protein sequence ID" value="ACO23806.1"/>
    <property type="molecule type" value="Genomic_DNA"/>
</dbReference>
<dbReference type="RefSeq" id="WP_000068050.1">
    <property type="nucleotide sequence ID" value="NC_012469.1"/>
</dbReference>
<dbReference type="SMR" id="C1CSC7"/>
<dbReference type="KEGG" id="snt:SPT_1443"/>
<dbReference type="HOGENOM" id="CLU_084338_1_0_9"/>
<dbReference type="GO" id="GO:0005886">
    <property type="term" value="C:plasma membrane"/>
    <property type="evidence" value="ECO:0007669"/>
    <property type="project" value="UniProtKB-SubCell"/>
</dbReference>
<dbReference type="GO" id="GO:0045259">
    <property type="term" value="C:proton-transporting ATP synthase complex"/>
    <property type="evidence" value="ECO:0007669"/>
    <property type="project" value="UniProtKB-KW"/>
</dbReference>
<dbReference type="GO" id="GO:0005524">
    <property type="term" value="F:ATP binding"/>
    <property type="evidence" value="ECO:0007669"/>
    <property type="project" value="UniProtKB-UniRule"/>
</dbReference>
<dbReference type="GO" id="GO:0046933">
    <property type="term" value="F:proton-transporting ATP synthase activity, rotational mechanism"/>
    <property type="evidence" value="ECO:0007669"/>
    <property type="project" value="UniProtKB-UniRule"/>
</dbReference>
<dbReference type="CDD" id="cd12152">
    <property type="entry name" value="F1-ATPase_delta"/>
    <property type="match status" value="1"/>
</dbReference>
<dbReference type="FunFam" id="1.20.5.440:FF:000001">
    <property type="entry name" value="ATP synthase epsilon chain"/>
    <property type="match status" value="1"/>
</dbReference>
<dbReference type="Gene3D" id="1.20.5.440">
    <property type="entry name" value="ATP synthase delta/epsilon subunit, C-terminal domain"/>
    <property type="match status" value="1"/>
</dbReference>
<dbReference type="Gene3D" id="2.60.15.10">
    <property type="entry name" value="F0F1 ATP synthase delta/epsilon subunit, N-terminal"/>
    <property type="match status" value="1"/>
</dbReference>
<dbReference type="HAMAP" id="MF_00530">
    <property type="entry name" value="ATP_synth_epsil_bac"/>
    <property type="match status" value="1"/>
</dbReference>
<dbReference type="InterPro" id="IPR001469">
    <property type="entry name" value="ATP_synth_F1_dsu/esu"/>
</dbReference>
<dbReference type="InterPro" id="IPR020546">
    <property type="entry name" value="ATP_synth_F1_dsu/esu_N"/>
</dbReference>
<dbReference type="InterPro" id="IPR020547">
    <property type="entry name" value="ATP_synth_F1_esu_C"/>
</dbReference>
<dbReference type="InterPro" id="IPR036771">
    <property type="entry name" value="ATPsynth_dsu/esu_N"/>
</dbReference>
<dbReference type="NCBIfam" id="TIGR01216">
    <property type="entry name" value="ATP_synt_epsi"/>
    <property type="match status" value="1"/>
</dbReference>
<dbReference type="NCBIfam" id="NF001846">
    <property type="entry name" value="PRK00571.1-3"/>
    <property type="match status" value="1"/>
</dbReference>
<dbReference type="PANTHER" id="PTHR13822">
    <property type="entry name" value="ATP SYNTHASE DELTA/EPSILON CHAIN"/>
    <property type="match status" value="1"/>
</dbReference>
<dbReference type="PANTHER" id="PTHR13822:SF10">
    <property type="entry name" value="ATP SYNTHASE EPSILON CHAIN, CHLOROPLASTIC"/>
    <property type="match status" value="1"/>
</dbReference>
<dbReference type="Pfam" id="PF00401">
    <property type="entry name" value="ATP-synt_DE"/>
    <property type="match status" value="1"/>
</dbReference>
<dbReference type="Pfam" id="PF02823">
    <property type="entry name" value="ATP-synt_DE_N"/>
    <property type="match status" value="1"/>
</dbReference>
<dbReference type="SUPFAM" id="SSF51344">
    <property type="entry name" value="Epsilon subunit of F1F0-ATP synthase N-terminal domain"/>
    <property type="match status" value="1"/>
</dbReference>
<proteinExistence type="inferred from homology"/>
<reference key="1">
    <citation type="journal article" date="2010" name="Genome Biol.">
        <title>Structure and dynamics of the pan-genome of Streptococcus pneumoniae and closely related species.</title>
        <authorList>
            <person name="Donati C."/>
            <person name="Hiller N.L."/>
            <person name="Tettelin H."/>
            <person name="Muzzi A."/>
            <person name="Croucher N.J."/>
            <person name="Angiuoli S.V."/>
            <person name="Oggioni M."/>
            <person name="Dunning Hotopp J.C."/>
            <person name="Hu F.Z."/>
            <person name="Riley D.R."/>
            <person name="Covacci A."/>
            <person name="Mitchell T.J."/>
            <person name="Bentley S.D."/>
            <person name="Kilian M."/>
            <person name="Ehrlich G.D."/>
            <person name="Rappuoli R."/>
            <person name="Moxon E.R."/>
            <person name="Masignani V."/>
        </authorList>
    </citation>
    <scope>NUCLEOTIDE SEQUENCE [LARGE SCALE GENOMIC DNA]</scope>
    <source>
        <strain>Taiwan19F-14</strain>
    </source>
</reference>
<feature type="chain" id="PRO_1000146354" description="ATP synthase epsilon chain">
    <location>
        <begin position="1"/>
        <end position="139"/>
    </location>
</feature>
<gene>
    <name evidence="1" type="primary">atpC</name>
    <name type="ordered locus">SPT_1443</name>
</gene>
<protein>
    <recommendedName>
        <fullName evidence="1">ATP synthase epsilon chain</fullName>
    </recommendedName>
    <alternativeName>
        <fullName evidence="1">ATP synthase F1 sector epsilon subunit</fullName>
    </alternativeName>
    <alternativeName>
        <fullName evidence="1">F-ATPase epsilon subunit</fullName>
    </alternativeName>
</protein>
<sequence>MAQLTVQIVTPDGLVYDHHASYVSVRTLDGEMGILPRHENMIAVLAVDEVKVKRIDDKDHVNWIAVNGGVIEIANDMITIVADSAERARDIDISRAERAKLRAERAIEEAQDKHLIDQERRAKIALQRAINRINVGNRL</sequence>
<name>ATPE_STRZT</name>
<keyword id="KW-0066">ATP synthesis</keyword>
<keyword id="KW-1003">Cell membrane</keyword>
<keyword id="KW-0139">CF(1)</keyword>
<keyword id="KW-0375">Hydrogen ion transport</keyword>
<keyword id="KW-0406">Ion transport</keyword>
<keyword id="KW-0472">Membrane</keyword>
<keyword id="KW-0813">Transport</keyword>
<accession>C1CSC7</accession>